<protein>
    <recommendedName>
        <fullName evidence="1">4-hydroxythreonine-4-phosphate dehydrogenase</fullName>
        <ecNumber evidence="1">1.1.1.262</ecNumber>
    </recommendedName>
    <alternativeName>
        <fullName evidence="1">4-(phosphohydroxy)-L-threonine dehydrogenase</fullName>
    </alternativeName>
</protein>
<dbReference type="EC" id="1.1.1.262" evidence="1"/>
<dbReference type="EMBL" id="CU928158">
    <property type="protein sequence ID" value="CAQ87649.1"/>
    <property type="molecule type" value="Genomic_DNA"/>
</dbReference>
<dbReference type="RefSeq" id="WP_000241248.1">
    <property type="nucleotide sequence ID" value="NC_011740.1"/>
</dbReference>
<dbReference type="SMR" id="B7LVS5"/>
<dbReference type="GeneID" id="75058849"/>
<dbReference type="KEGG" id="efe:EFER_0063"/>
<dbReference type="HOGENOM" id="CLU_040168_1_0_6"/>
<dbReference type="OrthoDB" id="9801783at2"/>
<dbReference type="UniPathway" id="UPA00244">
    <property type="reaction ID" value="UER00312"/>
</dbReference>
<dbReference type="Proteomes" id="UP000000745">
    <property type="component" value="Chromosome"/>
</dbReference>
<dbReference type="GO" id="GO:0005737">
    <property type="term" value="C:cytoplasm"/>
    <property type="evidence" value="ECO:0007669"/>
    <property type="project" value="UniProtKB-SubCell"/>
</dbReference>
<dbReference type="GO" id="GO:0050570">
    <property type="term" value="F:4-hydroxythreonine-4-phosphate dehydrogenase activity"/>
    <property type="evidence" value="ECO:0007669"/>
    <property type="project" value="UniProtKB-UniRule"/>
</dbReference>
<dbReference type="GO" id="GO:0050897">
    <property type="term" value="F:cobalt ion binding"/>
    <property type="evidence" value="ECO:0007669"/>
    <property type="project" value="UniProtKB-UniRule"/>
</dbReference>
<dbReference type="GO" id="GO:0000287">
    <property type="term" value="F:magnesium ion binding"/>
    <property type="evidence" value="ECO:0007669"/>
    <property type="project" value="UniProtKB-UniRule"/>
</dbReference>
<dbReference type="GO" id="GO:0051287">
    <property type="term" value="F:NAD binding"/>
    <property type="evidence" value="ECO:0007669"/>
    <property type="project" value="InterPro"/>
</dbReference>
<dbReference type="GO" id="GO:0008270">
    <property type="term" value="F:zinc ion binding"/>
    <property type="evidence" value="ECO:0007669"/>
    <property type="project" value="UniProtKB-UniRule"/>
</dbReference>
<dbReference type="GO" id="GO:0042823">
    <property type="term" value="P:pyridoxal phosphate biosynthetic process"/>
    <property type="evidence" value="ECO:0007669"/>
    <property type="project" value="UniProtKB-UniRule"/>
</dbReference>
<dbReference type="GO" id="GO:0008615">
    <property type="term" value="P:pyridoxine biosynthetic process"/>
    <property type="evidence" value="ECO:0007669"/>
    <property type="project" value="UniProtKB-UniRule"/>
</dbReference>
<dbReference type="FunFam" id="3.40.718.10:FF:000010">
    <property type="entry name" value="4-hydroxythreonine-4-phosphate dehydrogenase"/>
    <property type="match status" value="1"/>
</dbReference>
<dbReference type="Gene3D" id="3.40.718.10">
    <property type="entry name" value="Isopropylmalate Dehydrogenase"/>
    <property type="match status" value="1"/>
</dbReference>
<dbReference type="HAMAP" id="MF_00536">
    <property type="entry name" value="PdxA"/>
    <property type="match status" value="1"/>
</dbReference>
<dbReference type="InterPro" id="IPR037510">
    <property type="entry name" value="PdxA"/>
</dbReference>
<dbReference type="InterPro" id="IPR005255">
    <property type="entry name" value="PdxA_fam"/>
</dbReference>
<dbReference type="NCBIfam" id="TIGR00557">
    <property type="entry name" value="pdxA"/>
    <property type="match status" value="1"/>
</dbReference>
<dbReference type="PANTHER" id="PTHR30004">
    <property type="entry name" value="4-HYDROXYTHREONINE-4-PHOSPHATE DEHYDROGENASE"/>
    <property type="match status" value="1"/>
</dbReference>
<dbReference type="PANTHER" id="PTHR30004:SF5">
    <property type="entry name" value="4-HYDROXYTHREONINE-4-PHOSPHATE DEHYDROGENASE"/>
    <property type="match status" value="1"/>
</dbReference>
<dbReference type="Pfam" id="PF04166">
    <property type="entry name" value="PdxA"/>
    <property type="match status" value="1"/>
</dbReference>
<dbReference type="SUPFAM" id="SSF53659">
    <property type="entry name" value="Isocitrate/Isopropylmalate dehydrogenase-like"/>
    <property type="match status" value="1"/>
</dbReference>
<proteinExistence type="inferred from homology"/>
<sequence>MVKTQRVVITPGEPAGIGPDLVVQLAQREWPVELVVCADATLLTDRAAMLGLPLTLRPYSPNSPAQPQTAGTLTLLPVALRESVTAGQLAVENGHYVVETLARACDGCLNGEFAALITGPVHKGVINDAGIPFTGHTEFFEERSQAKKVVMMLATEELRVALATTHLPLRDIADAITPALLHEVIAILHHDLRTKFGIAEPRILVCGLNPHAGEGGHMGTEEIDTIIPVLDELRVQGMKLKGPLPADTLFQPKYLDNADAVLAMYHDQGLPVLKYQGFGRGVNITLGLPFIRTSVDHGTALELAGRGKADVGSFITALNLAIKMIVNTQ</sequence>
<accession>B7LVS5</accession>
<evidence type="ECO:0000255" key="1">
    <source>
        <dbReference type="HAMAP-Rule" id="MF_00536"/>
    </source>
</evidence>
<comment type="function">
    <text evidence="1">Catalyzes the NAD(P)-dependent oxidation of 4-(phosphooxy)-L-threonine (HTP) into 2-amino-3-oxo-4-(phosphooxy)butyric acid which spontaneously decarboxylates to form 3-amino-2-oxopropyl phosphate (AHAP).</text>
</comment>
<comment type="catalytic activity">
    <reaction evidence="1">
        <text>4-(phosphooxy)-L-threonine + NAD(+) = 3-amino-2-oxopropyl phosphate + CO2 + NADH</text>
        <dbReference type="Rhea" id="RHEA:32275"/>
        <dbReference type="ChEBI" id="CHEBI:16526"/>
        <dbReference type="ChEBI" id="CHEBI:57279"/>
        <dbReference type="ChEBI" id="CHEBI:57540"/>
        <dbReference type="ChEBI" id="CHEBI:57945"/>
        <dbReference type="ChEBI" id="CHEBI:58452"/>
        <dbReference type="EC" id="1.1.1.262"/>
    </reaction>
</comment>
<comment type="cofactor">
    <cofactor evidence="1">
        <name>Zn(2+)</name>
        <dbReference type="ChEBI" id="CHEBI:29105"/>
    </cofactor>
    <cofactor evidence="1">
        <name>Mg(2+)</name>
        <dbReference type="ChEBI" id="CHEBI:18420"/>
    </cofactor>
    <cofactor evidence="1">
        <name>Co(2+)</name>
        <dbReference type="ChEBI" id="CHEBI:48828"/>
    </cofactor>
    <text evidence="1">Binds 1 divalent metal cation per subunit. Can use ions such as Zn(2+), Mg(2+) or Co(2+).</text>
</comment>
<comment type="pathway">
    <text evidence="1">Cofactor biosynthesis; pyridoxine 5'-phosphate biosynthesis; pyridoxine 5'-phosphate from D-erythrose 4-phosphate: step 4/5.</text>
</comment>
<comment type="subunit">
    <text evidence="1">Homodimer.</text>
</comment>
<comment type="subcellular location">
    <subcellularLocation>
        <location evidence="1">Cytoplasm</location>
    </subcellularLocation>
</comment>
<comment type="miscellaneous">
    <text evidence="1">The active site is located at the dimer interface.</text>
</comment>
<comment type="similarity">
    <text evidence="1">Belongs to the PdxA family.</text>
</comment>
<name>PDXA_ESCF3</name>
<reference key="1">
    <citation type="journal article" date="2009" name="PLoS Genet.">
        <title>Organised genome dynamics in the Escherichia coli species results in highly diverse adaptive paths.</title>
        <authorList>
            <person name="Touchon M."/>
            <person name="Hoede C."/>
            <person name="Tenaillon O."/>
            <person name="Barbe V."/>
            <person name="Baeriswyl S."/>
            <person name="Bidet P."/>
            <person name="Bingen E."/>
            <person name="Bonacorsi S."/>
            <person name="Bouchier C."/>
            <person name="Bouvet O."/>
            <person name="Calteau A."/>
            <person name="Chiapello H."/>
            <person name="Clermont O."/>
            <person name="Cruveiller S."/>
            <person name="Danchin A."/>
            <person name="Diard M."/>
            <person name="Dossat C."/>
            <person name="Karoui M.E."/>
            <person name="Frapy E."/>
            <person name="Garry L."/>
            <person name="Ghigo J.M."/>
            <person name="Gilles A.M."/>
            <person name="Johnson J."/>
            <person name="Le Bouguenec C."/>
            <person name="Lescat M."/>
            <person name="Mangenot S."/>
            <person name="Martinez-Jehanne V."/>
            <person name="Matic I."/>
            <person name="Nassif X."/>
            <person name="Oztas S."/>
            <person name="Petit M.A."/>
            <person name="Pichon C."/>
            <person name="Rouy Z."/>
            <person name="Ruf C.S."/>
            <person name="Schneider D."/>
            <person name="Tourret J."/>
            <person name="Vacherie B."/>
            <person name="Vallenet D."/>
            <person name="Medigue C."/>
            <person name="Rocha E.P.C."/>
            <person name="Denamur E."/>
        </authorList>
    </citation>
    <scope>NUCLEOTIDE SEQUENCE [LARGE SCALE GENOMIC DNA]</scope>
    <source>
        <strain>ATCC 35469 / DSM 13698 / BCRC 15582 / CCUG 18766 / IAM 14443 / JCM 21226 / LMG 7866 / NBRC 102419 / NCTC 12128 / CDC 0568-73</strain>
    </source>
</reference>
<feature type="chain" id="PRO_1000128249" description="4-hydroxythreonine-4-phosphate dehydrogenase">
    <location>
        <begin position="1"/>
        <end position="329"/>
    </location>
</feature>
<feature type="binding site" evidence="1">
    <location>
        <position position="136"/>
    </location>
    <ligand>
        <name>substrate</name>
    </ligand>
</feature>
<feature type="binding site" evidence="1">
    <location>
        <position position="137"/>
    </location>
    <ligand>
        <name>substrate</name>
    </ligand>
</feature>
<feature type="binding site" evidence="1">
    <location>
        <position position="166"/>
    </location>
    <ligand>
        <name>a divalent metal cation</name>
        <dbReference type="ChEBI" id="CHEBI:60240"/>
        <note>ligand shared between dimeric partners</note>
    </ligand>
</feature>
<feature type="binding site" evidence="1">
    <location>
        <position position="211"/>
    </location>
    <ligand>
        <name>a divalent metal cation</name>
        <dbReference type="ChEBI" id="CHEBI:60240"/>
        <note>ligand shared between dimeric partners</note>
    </ligand>
</feature>
<feature type="binding site" evidence="1">
    <location>
        <position position="266"/>
    </location>
    <ligand>
        <name>a divalent metal cation</name>
        <dbReference type="ChEBI" id="CHEBI:60240"/>
        <note>ligand shared between dimeric partners</note>
    </ligand>
</feature>
<feature type="binding site" evidence="1">
    <location>
        <position position="274"/>
    </location>
    <ligand>
        <name>substrate</name>
    </ligand>
</feature>
<feature type="binding site" evidence="1">
    <location>
        <position position="283"/>
    </location>
    <ligand>
        <name>substrate</name>
    </ligand>
</feature>
<feature type="binding site" evidence="1">
    <location>
        <position position="292"/>
    </location>
    <ligand>
        <name>substrate</name>
    </ligand>
</feature>
<keyword id="KW-0170">Cobalt</keyword>
<keyword id="KW-0963">Cytoplasm</keyword>
<keyword id="KW-0460">Magnesium</keyword>
<keyword id="KW-0479">Metal-binding</keyword>
<keyword id="KW-0520">NAD</keyword>
<keyword id="KW-0521">NADP</keyword>
<keyword id="KW-0560">Oxidoreductase</keyword>
<keyword id="KW-0664">Pyridoxine biosynthesis</keyword>
<keyword id="KW-0862">Zinc</keyword>
<gene>
    <name evidence="1" type="primary">pdxA</name>
    <name type="ordered locus">EFER_0063</name>
</gene>
<organism>
    <name type="scientific">Escherichia fergusonii (strain ATCC 35469 / DSM 13698 / CCUG 18766 / IAM 14443 / JCM 21226 / LMG 7866 / NBRC 102419 / NCTC 12128 / CDC 0568-73)</name>
    <dbReference type="NCBI Taxonomy" id="585054"/>
    <lineage>
        <taxon>Bacteria</taxon>
        <taxon>Pseudomonadati</taxon>
        <taxon>Pseudomonadota</taxon>
        <taxon>Gammaproteobacteria</taxon>
        <taxon>Enterobacterales</taxon>
        <taxon>Enterobacteriaceae</taxon>
        <taxon>Escherichia</taxon>
    </lineage>
</organism>